<dbReference type="EC" id="3.5.1.5" evidence="1"/>
<dbReference type="EMBL" id="CP001614">
    <property type="protein sequence ID" value="ACS93594.1"/>
    <property type="molecule type" value="Genomic_DNA"/>
</dbReference>
<dbReference type="RefSeq" id="WP_015820988.1">
    <property type="nucleotide sequence ID" value="NC_012997.1"/>
</dbReference>
<dbReference type="SMR" id="C6AR50"/>
<dbReference type="STRING" id="377629.TERTU_4208"/>
<dbReference type="KEGG" id="ttu:TERTU_4208"/>
<dbReference type="eggNOG" id="COG0831">
    <property type="taxonomic scope" value="Bacteria"/>
</dbReference>
<dbReference type="HOGENOM" id="CLU_145825_1_0_6"/>
<dbReference type="OrthoDB" id="9797217at2"/>
<dbReference type="UniPathway" id="UPA00258">
    <property type="reaction ID" value="UER00370"/>
</dbReference>
<dbReference type="Proteomes" id="UP000009080">
    <property type="component" value="Chromosome"/>
</dbReference>
<dbReference type="GO" id="GO:0005737">
    <property type="term" value="C:cytoplasm"/>
    <property type="evidence" value="ECO:0007669"/>
    <property type="project" value="UniProtKB-SubCell"/>
</dbReference>
<dbReference type="GO" id="GO:0016151">
    <property type="term" value="F:nickel cation binding"/>
    <property type="evidence" value="ECO:0007669"/>
    <property type="project" value="InterPro"/>
</dbReference>
<dbReference type="GO" id="GO:0009039">
    <property type="term" value="F:urease activity"/>
    <property type="evidence" value="ECO:0007669"/>
    <property type="project" value="UniProtKB-UniRule"/>
</dbReference>
<dbReference type="GO" id="GO:0043419">
    <property type="term" value="P:urea catabolic process"/>
    <property type="evidence" value="ECO:0007669"/>
    <property type="project" value="UniProtKB-UniRule"/>
</dbReference>
<dbReference type="CDD" id="cd00390">
    <property type="entry name" value="Urease_gamma"/>
    <property type="match status" value="1"/>
</dbReference>
<dbReference type="Gene3D" id="3.30.280.10">
    <property type="entry name" value="Urease, gamma-like subunit"/>
    <property type="match status" value="1"/>
</dbReference>
<dbReference type="HAMAP" id="MF_00739">
    <property type="entry name" value="Urease_gamma"/>
    <property type="match status" value="1"/>
</dbReference>
<dbReference type="InterPro" id="IPR012010">
    <property type="entry name" value="Urease_gamma"/>
</dbReference>
<dbReference type="InterPro" id="IPR002026">
    <property type="entry name" value="Urease_gamma/gamma-beta_su"/>
</dbReference>
<dbReference type="InterPro" id="IPR036463">
    <property type="entry name" value="Urease_gamma_sf"/>
</dbReference>
<dbReference type="InterPro" id="IPR050069">
    <property type="entry name" value="Urease_subunit"/>
</dbReference>
<dbReference type="NCBIfam" id="NF009712">
    <property type="entry name" value="PRK13241.1"/>
    <property type="match status" value="1"/>
</dbReference>
<dbReference type="NCBIfam" id="TIGR00193">
    <property type="entry name" value="urease_gam"/>
    <property type="match status" value="1"/>
</dbReference>
<dbReference type="PANTHER" id="PTHR33569">
    <property type="entry name" value="UREASE"/>
    <property type="match status" value="1"/>
</dbReference>
<dbReference type="PANTHER" id="PTHR33569:SF1">
    <property type="entry name" value="UREASE"/>
    <property type="match status" value="1"/>
</dbReference>
<dbReference type="Pfam" id="PF00547">
    <property type="entry name" value="Urease_gamma"/>
    <property type="match status" value="1"/>
</dbReference>
<dbReference type="PIRSF" id="PIRSF001223">
    <property type="entry name" value="Urease_gamma"/>
    <property type="match status" value="1"/>
</dbReference>
<dbReference type="SUPFAM" id="SSF54111">
    <property type="entry name" value="Urease, gamma-subunit"/>
    <property type="match status" value="1"/>
</dbReference>
<keyword id="KW-0963">Cytoplasm</keyword>
<keyword id="KW-0378">Hydrolase</keyword>
<keyword id="KW-1185">Reference proteome</keyword>
<organism>
    <name type="scientific">Teredinibacter turnerae (strain ATCC 39867 / T7901)</name>
    <dbReference type="NCBI Taxonomy" id="377629"/>
    <lineage>
        <taxon>Bacteria</taxon>
        <taxon>Pseudomonadati</taxon>
        <taxon>Pseudomonadota</taxon>
        <taxon>Gammaproteobacteria</taxon>
        <taxon>Cellvibrionales</taxon>
        <taxon>Cellvibrionaceae</taxon>
        <taxon>Teredinibacter</taxon>
    </lineage>
</organism>
<feature type="chain" id="PRO_1000212804" description="Urease subunit gamma">
    <location>
        <begin position="1"/>
        <end position="100"/>
    </location>
</feature>
<reference key="1">
    <citation type="journal article" date="2009" name="PLoS ONE">
        <title>The complete genome of Teredinibacter turnerae T7901: an intracellular endosymbiont of marine wood-boring bivalves (shipworms).</title>
        <authorList>
            <person name="Yang J.C."/>
            <person name="Madupu R."/>
            <person name="Durkin A.S."/>
            <person name="Ekborg N.A."/>
            <person name="Pedamallu C.S."/>
            <person name="Hostetler J.B."/>
            <person name="Radune D."/>
            <person name="Toms B.S."/>
            <person name="Henrissat B."/>
            <person name="Coutinho P.M."/>
            <person name="Schwarz S."/>
            <person name="Field L."/>
            <person name="Trindade-Silva A.E."/>
            <person name="Soares C.A.G."/>
            <person name="Elshahawi S."/>
            <person name="Hanora A."/>
            <person name="Schmidt E.W."/>
            <person name="Haygood M.G."/>
            <person name="Posfai J."/>
            <person name="Benner J."/>
            <person name="Madinger C."/>
            <person name="Nove J."/>
            <person name="Anton B."/>
            <person name="Chaudhary K."/>
            <person name="Foster J."/>
            <person name="Holman A."/>
            <person name="Kumar S."/>
            <person name="Lessard P.A."/>
            <person name="Luyten Y.A."/>
            <person name="Slatko B."/>
            <person name="Wood N."/>
            <person name="Wu B."/>
            <person name="Teplitski M."/>
            <person name="Mougous J.D."/>
            <person name="Ward N."/>
            <person name="Eisen J.A."/>
            <person name="Badger J.H."/>
            <person name="Distel D.L."/>
        </authorList>
    </citation>
    <scope>NUCLEOTIDE SEQUENCE [LARGE SCALE GENOMIC DNA]</scope>
    <source>
        <strain>ATCC 39867 / T7901</strain>
    </source>
</reference>
<name>URE3_TERTT</name>
<gene>
    <name evidence="1" type="primary">ureA</name>
    <name type="ordered locus">TERTU_4208</name>
</gene>
<proteinExistence type="inferred from homology"/>
<sequence>MELSPREKDKLLIFTAALLAERRKEKGLKLNYPESIALISAAIMEGAREGKTVAELMDFGRTILSRDDVMEGIAEMIHDVQVEATFPDGTKLVTVHEPIV</sequence>
<evidence type="ECO:0000255" key="1">
    <source>
        <dbReference type="HAMAP-Rule" id="MF_00739"/>
    </source>
</evidence>
<comment type="catalytic activity">
    <reaction evidence="1">
        <text>urea + 2 H2O + H(+) = hydrogencarbonate + 2 NH4(+)</text>
        <dbReference type="Rhea" id="RHEA:20557"/>
        <dbReference type="ChEBI" id="CHEBI:15377"/>
        <dbReference type="ChEBI" id="CHEBI:15378"/>
        <dbReference type="ChEBI" id="CHEBI:16199"/>
        <dbReference type="ChEBI" id="CHEBI:17544"/>
        <dbReference type="ChEBI" id="CHEBI:28938"/>
        <dbReference type="EC" id="3.5.1.5"/>
    </reaction>
</comment>
<comment type="pathway">
    <text evidence="1">Nitrogen metabolism; urea degradation; CO(2) and NH(3) from urea (urease route): step 1/1.</text>
</comment>
<comment type="subunit">
    <text evidence="1">Heterotrimer of UreA (gamma), UreB (beta) and UreC (alpha) subunits. Three heterotrimers associate to form the active enzyme.</text>
</comment>
<comment type="subcellular location">
    <subcellularLocation>
        <location evidence="1">Cytoplasm</location>
    </subcellularLocation>
</comment>
<comment type="similarity">
    <text evidence="1">Belongs to the urease gamma subunit family.</text>
</comment>
<protein>
    <recommendedName>
        <fullName evidence="1">Urease subunit gamma</fullName>
        <ecNumber evidence="1">3.5.1.5</ecNumber>
    </recommendedName>
    <alternativeName>
        <fullName evidence="1">Urea amidohydrolase subunit gamma</fullName>
    </alternativeName>
</protein>
<accession>C6AR50</accession>